<feature type="chain" id="PRO_0000271374" description="Regulator of G-protein signaling 2">
    <location>
        <begin position="1"/>
        <end position="211"/>
    </location>
</feature>
<feature type="domain" description="RGS" evidence="3">
    <location>
        <begin position="83"/>
        <end position="199"/>
    </location>
</feature>
<feature type="region of interest" description="Disordered" evidence="4">
    <location>
        <begin position="14"/>
        <end position="33"/>
    </location>
</feature>
<feature type="region of interest" description="Necessary for membrane association" evidence="2">
    <location>
        <begin position="32"/>
        <end position="66"/>
    </location>
</feature>
<feature type="region of interest" description="Disordered" evidence="4">
    <location>
        <begin position="49"/>
        <end position="71"/>
    </location>
</feature>
<feature type="region of interest" description="Necessary to inhibit protein synthesis" evidence="2">
    <location>
        <begin position="79"/>
        <end position="116"/>
    </location>
</feature>
<comment type="function">
    <text evidence="1 2">Regulates G protein-coupled receptor signaling cascades. Inhibits signal transduction by increasing the GTPase activity of G protein alpha subunits, thereby driving them into their inactive GDP-bound form (By similarity). It is involved in the negative regulation of the angiotensin-activated signaling pathway (By similarity). Plays a role in the regulation of blood pressure in response to signaling via G protein-coupled receptors and GNAQ. Plays a role in regulating the constriction and relaxation of vascular smooth muscle (By similarity). Binds EIF2B5 and blocks its activity, thereby inhibiting the translation of mRNA into protein (By similarity).</text>
</comment>
<comment type="subunit">
    <text evidence="2">Interacts with GNAQ. Does not interact with GNAI1 and GNAI3. Interacts with EIF2B5. Interacts with PRKG1 (isoform alpha).</text>
</comment>
<comment type="subcellular location">
    <subcellularLocation>
        <location evidence="2">Cell membrane</location>
    </subcellularLocation>
    <subcellularLocation>
        <location evidence="2">Cytoplasm</location>
    </subcellularLocation>
    <subcellularLocation>
        <location evidence="2">Nucleus</location>
        <location evidence="2">Nucleolus</location>
    </subcellularLocation>
</comment>
<comment type="PTM">
    <text evidence="2">Phosphorylated by protein kinase C. Phosphorylation by PRKG1 leads to activation of RGS2 activity.</text>
</comment>
<dbReference type="EMBL" id="BC120026">
    <property type="protein sequence ID" value="AAI20027.1"/>
    <property type="molecule type" value="mRNA"/>
</dbReference>
<dbReference type="RefSeq" id="NP_001069064.1">
    <property type="nucleotide sequence ID" value="NM_001075596.1"/>
</dbReference>
<dbReference type="SMR" id="Q0P5H5"/>
<dbReference type="FunCoup" id="Q0P5H5">
    <property type="interactions" value="320"/>
</dbReference>
<dbReference type="STRING" id="9913.ENSBTAP00000067806"/>
<dbReference type="PaxDb" id="9913-ENSBTAP00000026460"/>
<dbReference type="Ensembl" id="ENSBTAT00000027478.6">
    <property type="protein sequence ID" value="ENSBTAP00000067806.1"/>
    <property type="gene ID" value="ENSBTAG00000020620.6"/>
</dbReference>
<dbReference type="GeneID" id="513055"/>
<dbReference type="KEGG" id="bta:513055"/>
<dbReference type="VEuPathDB" id="HostDB:ENSBTAG00000020620"/>
<dbReference type="eggNOG" id="KOG3589">
    <property type="taxonomic scope" value="Eukaryota"/>
</dbReference>
<dbReference type="GeneTree" id="ENSGT00940000157937"/>
<dbReference type="InParanoid" id="Q0P5H5"/>
<dbReference type="OMA" id="DFHTRNA"/>
<dbReference type="OrthoDB" id="196547at2759"/>
<dbReference type="Proteomes" id="UP000009136">
    <property type="component" value="Chromosome 4"/>
</dbReference>
<dbReference type="Bgee" id="ENSBTAG00000020620">
    <property type="expression patterns" value="Expressed in oocyte and 65 other cell types or tissues"/>
</dbReference>
<dbReference type="GO" id="GO:0005737">
    <property type="term" value="C:cytoplasm"/>
    <property type="evidence" value="ECO:0000250"/>
    <property type="project" value="UniProtKB"/>
</dbReference>
<dbReference type="GO" id="GO:0005730">
    <property type="term" value="C:nucleolus"/>
    <property type="evidence" value="ECO:0007669"/>
    <property type="project" value="UniProtKB-SubCell"/>
</dbReference>
<dbReference type="GO" id="GO:0005634">
    <property type="term" value="C:nucleus"/>
    <property type="evidence" value="ECO:0000250"/>
    <property type="project" value="UniProtKB"/>
</dbReference>
<dbReference type="GO" id="GO:0005886">
    <property type="term" value="C:plasma membrane"/>
    <property type="evidence" value="ECO:0000250"/>
    <property type="project" value="UniProtKB"/>
</dbReference>
<dbReference type="GO" id="GO:0005096">
    <property type="term" value="F:GTPase activator activity"/>
    <property type="evidence" value="ECO:0000250"/>
    <property type="project" value="UniProtKB"/>
</dbReference>
<dbReference type="GO" id="GO:0009968">
    <property type="term" value="P:negative regulation of signal transduction"/>
    <property type="evidence" value="ECO:0007669"/>
    <property type="project" value="UniProtKB-KW"/>
</dbReference>
<dbReference type="GO" id="GO:0006417">
    <property type="term" value="P:regulation of translation"/>
    <property type="evidence" value="ECO:0007669"/>
    <property type="project" value="UniProtKB-KW"/>
</dbReference>
<dbReference type="CDD" id="cd08709">
    <property type="entry name" value="RGS_RGS2"/>
    <property type="match status" value="1"/>
</dbReference>
<dbReference type="FunFam" id="1.10.167.10:FF:000001">
    <property type="entry name" value="Putative regulator of g-protein signaling 12"/>
    <property type="match status" value="1"/>
</dbReference>
<dbReference type="FunFam" id="1.10.196.10:FF:000001">
    <property type="entry name" value="Regulator of G-protein signaling 8"/>
    <property type="match status" value="1"/>
</dbReference>
<dbReference type="Gene3D" id="1.10.196.10">
    <property type="match status" value="1"/>
</dbReference>
<dbReference type="Gene3D" id="1.10.167.10">
    <property type="entry name" value="Regulator of G-protein Signalling 4, domain 2"/>
    <property type="match status" value="1"/>
</dbReference>
<dbReference type="InterPro" id="IPR016137">
    <property type="entry name" value="RGS"/>
</dbReference>
<dbReference type="InterPro" id="IPR034947">
    <property type="entry name" value="RGS2_RGS"/>
</dbReference>
<dbReference type="InterPro" id="IPR036305">
    <property type="entry name" value="RGS_sf"/>
</dbReference>
<dbReference type="InterPro" id="IPR024066">
    <property type="entry name" value="RGS_subdom1/3"/>
</dbReference>
<dbReference type="InterPro" id="IPR044926">
    <property type="entry name" value="RGS_subdomain_2"/>
</dbReference>
<dbReference type="PANTHER" id="PTHR10845">
    <property type="entry name" value="REGULATOR OF G PROTEIN SIGNALING"/>
    <property type="match status" value="1"/>
</dbReference>
<dbReference type="PANTHER" id="PTHR10845:SF43">
    <property type="entry name" value="REGULATOR OF G-PROTEIN SIGNALING 2"/>
    <property type="match status" value="1"/>
</dbReference>
<dbReference type="Pfam" id="PF00615">
    <property type="entry name" value="RGS"/>
    <property type="match status" value="1"/>
</dbReference>
<dbReference type="PRINTS" id="PR01301">
    <property type="entry name" value="RGSPROTEIN"/>
</dbReference>
<dbReference type="SMART" id="SM00315">
    <property type="entry name" value="RGS"/>
    <property type="match status" value="1"/>
</dbReference>
<dbReference type="SUPFAM" id="SSF48097">
    <property type="entry name" value="Regulator of G-protein signaling, RGS"/>
    <property type="match status" value="1"/>
</dbReference>
<dbReference type="PROSITE" id="PS50132">
    <property type="entry name" value="RGS"/>
    <property type="match status" value="1"/>
</dbReference>
<accession>Q0P5H5</accession>
<keyword id="KW-0131">Cell cycle</keyword>
<keyword id="KW-1003">Cell membrane</keyword>
<keyword id="KW-0963">Cytoplasm</keyword>
<keyword id="KW-0343">GTPase activation</keyword>
<keyword id="KW-0472">Membrane</keyword>
<keyword id="KW-0539">Nucleus</keyword>
<keyword id="KW-0597">Phosphoprotein</keyword>
<keyword id="KW-1185">Reference proteome</keyword>
<keyword id="KW-0734">Signal transduction inhibitor</keyword>
<keyword id="KW-0810">Translation regulation</keyword>
<sequence length="211" mass="24210">MQSALFLAVQHECGPMDKGAGTGPKNEEKREKMKRTLLKDWKSRLSYFLQNSSSPGKPKTGKKSKQQTFIKPSPEEAQLWSEAFDELLASKYGLAAFRAFLKSEFCEENIEFWLACEDFKKTKSPQKLSSKAKKIYTDFIEKEAPKEINIDFQTKSLIAQNIQEATSGCFTTAQKRVYSLMENNSYPRFLESEFYQDLCKKPQITTEPHAT</sequence>
<protein>
    <recommendedName>
        <fullName>Regulator of G-protein signaling 2</fullName>
        <shortName>RGS2</shortName>
    </recommendedName>
</protein>
<proteinExistence type="evidence at transcript level"/>
<gene>
    <name type="primary">RGS2</name>
</gene>
<name>RGS2_BOVIN</name>
<evidence type="ECO:0000250" key="1">
    <source>
        <dbReference type="UniProtKB" id="O08849"/>
    </source>
</evidence>
<evidence type="ECO:0000250" key="2">
    <source>
        <dbReference type="UniProtKB" id="P41220"/>
    </source>
</evidence>
<evidence type="ECO:0000255" key="3">
    <source>
        <dbReference type="PROSITE-ProRule" id="PRU00171"/>
    </source>
</evidence>
<evidence type="ECO:0000256" key="4">
    <source>
        <dbReference type="SAM" id="MobiDB-lite"/>
    </source>
</evidence>
<organism>
    <name type="scientific">Bos taurus</name>
    <name type="common">Bovine</name>
    <dbReference type="NCBI Taxonomy" id="9913"/>
    <lineage>
        <taxon>Eukaryota</taxon>
        <taxon>Metazoa</taxon>
        <taxon>Chordata</taxon>
        <taxon>Craniata</taxon>
        <taxon>Vertebrata</taxon>
        <taxon>Euteleostomi</taxon>
        <taxon>Mammalia</taxon>
        <taxon>Eutheria</taxon>
        <taxon>Laurasiatheria</taxon>
        <taxon>Artiodactyla</taxon>
        <taxon>Ruminantia</taxon>
        <taxon>Pecora</taxon>
        <taxon>Bovidae</taxon>
        <taxon>Bovinae</taxon>
        <taxon>Bos</taxon>
    </lineage>
</organism>
<reference key="1">
    <citation type="submission" date="2006-08" db="EMBL/GenBank/DDBJ databases">
        <authorList>
            <consortium name="NIH - Mammalian Gene Collection (MGC) project"/>
        </authorList>
    </citation>
    <scope>NUCLEOTIDE SEQUENCE [LARGE SCALE MRNA]</scope>
    <source>
        <strain>Hereford</strain>
        <tissue>Fetal lung</tissue>
    </source>
</reference>